<name>CNOT7_CAEEL</name>
<dbReference type="EC" id="3.1.13.4" evidence="5"/>
<dbReference type="EMBL" id="U21854">
    <property type="protein sequence ID" value="AAA87454.1"/>
    <property type="molecule type" value="mRNA"/>
</dbReference>
<dbReference type="EMBL" id="BX284603">
    <property type="protein sequence ID" value="CAB60501.1"/>
    <property type="molecule type" value="Genomic_DNA"/>
</dbReference>
<dbReference type="RefSeq" id="NP_499553.1">
    <property type="nucleotide sequence ID" value="NM_067152.7"/>
</dbReference>
<dbReference type="SMR" id="Q17345"/>
<dbReference type="BioGRID" id="41805">
    <property type="interactions" value="22"/>
</dbReference>
<dbReference type="ComplexPortal" id="CPX-634">
    <property type="entry name" value="Ccr4-Not complex"/>
</dbReference>
<dbReference type="DIP" id="DIP-29083N"/>
<dbReference type="FunCoup" id="Q17345">
    <property type="interactions" value="3497"/>
</dbReference>
<dbReference type="IntAct" id="Q17345">
    <property type="interactions" value="4"/>
</dbReference>
<dbReference type="STRING" id="6239.Y56A3A.20.1"/>
<dbReference type="PaxDb" id="6239-Y56A3A.20"/>
<dbReference type="PeptideAtlas" id="Q17345"/>
<dbReference type="EnsemblMetazoa" id="Y56A3A.20.1">
    <property type="protein sequence ID" value="Y56A3A.20.1"/>
    <property type="gene ID" value="WBGene00000369"/>
</dbReference>
<dbReference type="GeneID" id="176625"/>
<dbReference type="KEGG" id="cel:CELE_Y56A3A.20"/>
<dbReference type="UCSC" id="Y56A3A.20.1">
    <property type="organism name" value="c. elegans"/>
</dbReference>
<dbReference type="AGR" id="WB:WBGene00000369"/>
<dbReference type="CTD" id="176625"/>
<dbReference type="WormBase" id="Y56A3A.20">
    <property type="protein sequence ID" value="CE22588"/>
    <property type="gene ID" value="WBGene00000369"/>
    <property type="gene designation" value="ccf-1"/>
</dbReference>
<dbReference type="eggNOG" id="KOG0304">
    <property type="taxonomic scope" value="Eukaryota"/>
</dbReference>
<dbReference type="GeneTree" id="ENSGT00390000000080"/>
<dbReference type="HOGENOM" id="CLU_027974_0_1_1"/>
<dbReference type="InParanoid" id="Q17345"/>
<dbReference type="OMA" id="RTPNCAS"/>
<dbReference type="OrthoDB" id="1164111at2759"/>
<dbReference type="PhylomeDB" id="Q17345"/>
<dbReference type="SignaLink" id="Q17345"/>
<dbReference type="CD-CODE" id="73A75392">
    <property type="entry name" value="P-granule"/>
</dbReference>
<dbReference type="PRO" id="PR:Q17345"/>
<dbReference type="Proteomes" id="UP000001940">
    <property type="component" value="Chromosome III"/>
</dbReference>
<dbReference type="Bgee" id="WBGene00000369">
    <property type="expression patterns" value="Expressed in germ line (C elegans) and 4 other cell types or tissues"/>
</dbReference>
<dbReference type="GO" id="GO:0030014">
    <property type="term" value="C:CCR4-NOT complex"/>
    <property type="evidence" value="ECO:0000314"/>
    <property type="project" value="WormBase"/>
</dbReference>
<dbReference type="GO" id="GO:0030015">
    <property type="term" value="C:CCR4-NOT core complex"/>
    <property type="evidence" value="ECO:0000318"/>
    <property type="project" value="GO_Central"/>
</dbReference>
<dbReference type="GO" id="GO:0005737">
    <property type="term" value="C:cytoplasm"/>
    <property type="evidence" value="ECO:0000314"/>
    <property type="project" value="WormBase"/>
</dbReference>
<dbReference type="GO" id="GO:0005634">
    <property type="term" value="C:nucleus"/>
    <property type="evidence" value="ECO:0007669"/>
    <property type="project" value="UniProtKB-SubCell"/>
</dbReference>
<dbReference type="GO" id="GO:0043186">
    <property type="term" value="C:P granule"/>
    <property type="evidence" value="ECO:0000314"/>
    <property type="project" value="WormBase"/>
</dbReference>
<dbReference type="GO" id="GO:0000932">
    <property type="term" value="C:P-body"/>
    <property type="evidence" value="ECO:0000314"/>
    <property type="project" value="WormBase"/>
</dbReference>
<dbReference type="GO" id="GO:0046872">
    <property type="term" value="F:metal ion binding"/>
    <property type="evidence" value="ECO:0007669"/>
    <property type="project" value="UniProtKB-KW"/>
</dbReference>
<dbReference type="GO" id="GO:0004535">
    <property type="term" value="F:poly(A)-specific ribonuclease activity"/>
    <property type="evidence" value="ECO:0000318"/>
    <property type="project" value="GO_Central"/>
</dbReference>
<dbReference type="GO" id="GO:0003723">
    <property type="term" value="F:RNA binding"/>
    <property type="evidence" value="ECO:0007669"/>
    <property type="project" value="UniProtKB-KW"/>
</dbReference>
<dbReference type="GO" id="GO:0035279">
    <property type="term" value="P:miRNA-mediated gene silencing by mRNA destabilization"/>
    <property type="evidence" value="ECO:0000250"/>
    <property type="project" value="UniProtKB"/>
</dbReference>
<dbReference type="GO" id="GO:0000288">
    <property type="term" value="P:nuclear-transcribed mRNA catabolic process, deadenylation-dependent decay"/>
    <property type="evidence" value="ECO:0000318"/>
    <property type="project" value="GO_Central"/>
</dbReference>
<dbReference type="GO" id="GO:0000289">
    <property type="term" value="P:nuclear-transcribed mRNA poly(A) tail shortening"/>
    <property type="evidence" value="ECO:0000315"/>
    <property type="project" value="WormBase"/>
</dbReference>
<dbReference type="GO" id="GO:0048477">
    <property type="term" value="P:oogenesis"/>
    <property type="evidence" value="ECO:0000315"/>
    <property type="project" value="WormBase"/>
</dbReference>
<dbReference type="GO" id="GO:0032968">
    <property type="term" value="P:positive regulation of transcription elongation by RNA polymerase II"/>
    <property type="evidence" value="ECO:0000303"/>
    <property type="project" value="ComplexPortal"/>
</dbReference>
<dbReference type="GO" id="GO:0006417">
    <property type="term" value="P:regulation of translation"/>
    <property type="evidence" value="ECO:0007669"/>
    <property type="project" value="UniProtKB-KW"/>
</dbReference>
<dbReference type="FunFam" id="3.30.420.10:FF:000197">
    <property type="entry name" value="CCR4-NOT transcription complex subunit 7"/>
    <property type="match status" value="1"/>
</dbReference>
<dbReference type="Gene3D" id="3.30.420.10">
    <property type="entry name" value="Ribonuclease H-like superfamily/Ribonuclease H"/>
    <property type="match status" value="1"/>
</dbReference>
<dbReference type="InterPro" id="IPR039637">
    <property type="entry name" value="CNOT7/CNOT8/Pop2"/>
</dbReference>
<dbReference type="InterPro" id="IPR006941">
    <property type="entry name" value="RNase_CAF1"/>
</dbReference>
<dbReference type="InterPro" id="IPR012337">
    <property type="entry name" value="RNaseH-like_sf"/>
</dbReference>
<dbReference type="InterPro" id="IPR036397">
    <property type="entry name" value="RNaseH_sf"/>
</dbReference>
<dbReference type="PANTHER" id="PTHR10797">
    <property type="entry name" value="CCR4-NOT TRANSCRIPTION COMPLEX SUBUNIT"/>
    <property type="match status" value="1"/>
</dbReference>
<dbReference type="Pfam" id="PF04857">
    <property type="entry name" value="CAF1"/>
    <property type="match status" value="1"/>
</dbReference>
<dbReference type="SUPFAM" id="SSF53098">
    <property type="entry name" value="Ribonuclease H-like"/>
    <property type="match status" value="1"/>
</dbReference>
<proteinExistence type="evidence at protein level"/>
<feature type="chain" id="PRO_0000212848" description="CCR4-NOT transcription complex subunit 7">
    <location>
        <begin position="1"/>
        <end position="310"/>
    </location>
</feature>
<feature type="binding site" evidence="1">
    <location>
        <position position="51"/>
    </location>
    <ligand>
        <name>a divalent metal cation</name>
        <dbReference type="ChEBI" id="CHEBI:60240"/>
        <label>1</label>
        <note>catalytic</note>
    </ligand>
</feature>
<feature type="binding site" evidence="1">
    <location>
        <position position="51"/>
    </location>
    <ligand>
        <name>a divalent metal cation</name>
        <dbReference type="ChEBI" id="CHEBI:60240"/>
        <label>2</label>
        <note>catalytic</note>
    </ligand>
</feature>
<feature type="binding site" evidence="1">
    <location>
        <position position="53"/>
    </location>
    <ligand>
        <name>a divalent metal cation</name>
        <dbReference type="ChEBI" id="CHEBI:60240"/>
        <label>2</label>
        <note>catalytic</note>
    </ligand>
</feature>
<feature type="binding site" evidence="1">
    <location>
        <position position="172"/>
    </location>
    <ligand>
        <name>a divalent metal cation</name>
        <dbReference type="ChEBI" id="CHEBI:60240"/>
        <label>1</label>
        <note>catalytic</note>
    </ligand>
</feature>
<feature type="binding site" evidence="1">
    <location>
        <position position="245"/>
    </location>
    <ligand>
        <name>a divalent metal cation</name>
        <dbReference type="ChEBI" id="CHEBI:60240"/>
        <label>2</label>
        <note>catalytic</note>
    </ligand>
</feature>
<protein>
    <recommendedName>
        <fullName>CCR4-NOT transcription complex subunit 7</fullName>
        <ecNumber evidence="5">3.1.13.4</ecNumber>
    </recommendedName>
    <alternativeName>
        <fullName>CCR4-associated factor 1</fullName>
        <shortName>CAF1</shortName>
    </alternativeName>
</protein>
<reference key="1">
    <citation type="journal article" date="1995" name="Mol. Cell. Biol.">
        <title>Identification of a mouse protein whose homolog in Saccharomyces cerevisiae is a component of the CCR4 transcriptional regulatory complex.</title>
        <authorList>
            <person name="Draper M.P."/>
            <person name="Salvadore C."/>
            <person name="Denis C.L."/>
        </authorList>
    </citation>
    <scope>NUCLEOTIDE SEQUENCE [MRNA]</scope>
</reference>
<reference key="2">
    <citation type="journal article" date="1998" name="Science">
        <title>Genome sequence of the nematode C. elegans: a platform for investigating biology.</title>
        <authorList>
            <consortium name="The C. elegans sequencing consortium"/>
        </authorList>
    </citation>
    <scope>NUCLEOTIDE SEQUENCE [LARGE SCALE GENOMIC DNA]</scope>
    <source>
        <strain>Bristol N2</strain>
    </source>
</reference>
<reference key="3">
    <citation type="journal article" date="2013" name="J. Cell Sci.">
        <title>The Ccr4-Not deadenylase complex constitutes the main poly(A) removal activity in C. elegans.</title>
        <authorList>
            <person name="Nousch M."/>
            <person name="Techritz N."/>
            <person name="Hampel D."/>
            <person name="Millonigg S."/>
            <person name="Eckmann C.R."/>
        </authorList>
    </citation>
    <scope>FUNCTION</scope>
    <scope>CATALYTIC ACTIVITY</scope>
    <scope>IDENTIFICATION IN THE CCR4-NOT COMPLEX</scope>
    <scope>INTERACTION WITH LET-711</scope>
    <scope>TISSUE SPECIFICITY</scope>
    <scope>DEVELOPMENTAL STAGE</scope>
    <scope>DISRUPTION PHENOTYPE</scope>
</reference>
<reference key="4">
    <citation type="journal article" date="2017" name="Nucleic Acids Res.">
        <title>A continuum of mRNP complexes in embryonic microRNA-mediated silencing.</title>
        <authorList>
            <person name="Wu E."/>
            <person name="Vashisht A.A."/>
            <person name="Chapat C."/>
            <person name="Flamand M.N."/>
            <person name="Cohen E."/>
            <person name="Sarov M."/>
            <person name="Tabach Y."/>
            <person name="Sonenberg N."/>
            <person name="Wohlschlegel J."/>
            <person name="Duchaine T.F."/>
        </authorList>
    </citation>
    <scope>FUNCTION</scope>
    <scope>DISRUPTION PHENOTYPE</scope>
</reference>
<gene>
    <name evidence="6" type="primary">ccf-1</name>
    <name evidence="6" type="ORF">Y56A3A.20</name>
</gene>
<keyword id="KW-0963">Cytoplasm</keyword>
<keyword id="KW-0269">Exonuclease</keyword>
<keyword id="KW-0378">Hydrolase</keyword>
<keyword id="KW-0479">Metal-binding</keyword>
<keyword id="KW-0540">Nuclease</keyword>
<keyword id="KW-0539">Nucleus</keyword>
<keyword id="KW-1185">Reference proteome</keyword>
<keyword id="KW-0677">Repeat</keyword>
<keyword id="KW-0694">RNA-binding</keyword>
<keyword id="KW-0943">RNA-mediated gene silencing</keyword>
<keyword id="KW-0804">Transcription</keyword>
<keyword id="KW-0805">Transcription regulation</keyword>
<keyword id="KW-0810">Translation regulation</keyword>
<organism>
    <name type="scientific">Caenorhabditis elegans</name>
    <dbReference type="NCBI Taxonomy" id="6239"/>
    <lineage>
        <taxon>Eukaryota</taxon>
        <taxon>Metazoa</taxon>
        <taxon>Ecdysozoa</taxon>
        <taxon>Nematoda</taxon>
        <taxon>Chromadorea</taxon>
        <taxon>Rhabditida</taxon>
        <taxon>Rhabditina</taxon>
        <taxon>Rhabditomorpha</taxon>
        <taxon>Rhabditoidea</taxon>
        <taxon>Rhabditidae</taxon>
        <taxon>Peloderinae</taxon>
        <taxon>Caenorhabditis</taxon>
    </lineage>
</organism>
<evidence type="ECO:0000250" key="1"/>
<evidence type="ECO:0000269" key="2">
    <source>
    </source>
</evidence>
<evidence type="ECO:0000269" key="3">
    <source>
    </source>
</evidence>
<evidence type="ECO:0000305" key="4"/>
<evidence type="ECO:0000305" key="5">
    <source>
    </source>
</evidence>
<evidence type="ECO:0000312" key="6">
    <source>
        <dbReference type="WormBase" id="Y56A3A.20"/>
    </source>
</evidence>
<sequence>MASSSSGGAGGAGGASGAPEVKIHNVYMSNVEEEFARIRGFVEDYPYVAMDTEFPGVVATPLGTFRSKEDFNYQQVFCNVNMLKLIQVGFAMVNDKGELPPTGDVWQFNFNFSFAEDMFSHESVEMLRQAGIDFTLLQNNGIPTAVFGELLTTSGLITDPRITWLTFSSGYDFGYLLKSITLGDLPKEESTFFMCHKTLFPTSFDIKILLRTPNCASAKLKGGLQEVADQLDVKRQGVRHQAGSDALLTAATFFKIKKQFFGDNWNQIAPLICGHMFGLGSSLSLFHSSGSTSRLGDETPQGLIGVPQQA</sequence>
<accession>Q17345</accession>
<comment type="function">
    <text evidence="2 3">Catalytic component of the CCR4-NOT complex which is one of the major cellular mRNA deadenylases and is linked to various cellular processes including bulk mRNA degradation, miRNA-mediated repression, translational repression during translational initiation and general transcription regulation (PubMed:23843623, PubMed:28204614). Within the complex, plays a role in miRNA-mediated deadenylation in embryos (PubMed:28204614). Within the complex promotes germ cell development and fertility in hermaphrodites (PubMed:23843623). Additional complex functions may be a consequence of its influence on mRNA expression.</text>
</comment>
<comment type="catalytic activity">
    <reaction evidence="5">
        <text>Exonucleolytic cleavage of poly(A) to 5'-AMP.</text>
        <dbReference type="EC" id="3.1.13.4"/>
    </reaction>
</comment>
<comment type="subunit">
    <text evidence="2">Component of the CCR4-NOT complex at least composed of ccf-1, ccr-4 and let-711, which is required for germ cell development in hermaphrodites (PubMed:23843623). Within the complex interacts with let-711 (PubMed:23843623).</text>
</comment>
<comment type="subcellular location">
    <subcellularLocation>
        <location evidence="1">Nucleus</location>
    </subcellularLocation>
    <subcellularLocation>
        <location evidence="1">Cytoplasm</location>
    </subcellularLocation>
</comment>
<comment type="tissue specificity">
    <text evidence="2">Highly expressed in the germline (PubMed:23843623). In particular, highly expressed in germ cells that enter meiosis and progress through the pachytene stage (PubMed:23843623).</text>
</comment>
<comment type="developmental stage">
    <text evidence="2">Expressed at all developmental stages in males and hermaphrodites (PubMed:23843623). Expressed at low levels in embryos and L1 stage larvae (PubMed:23843623).</text>
</comment>
<comment type="disruption phenotype">
    <text evidence="2 3">RNAi-mediated knockdown either results in sterility or a reduced brood size (PubMed:23843623). RNAi-mediated knockdown disrupts the arrangement, differentiation and maturation of oocytes in the proximal region and as a result small oocyte-like cells arrange in several rows in the germline (PubMed:23843623). RNAi-mediated knockdown reduces miRNA-mediated deadenylation (PubMed:28204614). RNAi-mediated knockdown reduces ccr-4 and ntl-1 protein levels (PubMed:28204614). In another study, RNAi-mediated knockdown does not alter the levels of let-711 or ccr-4 (PubMed:23843623). RNAi-mediated knockdown results in reduced global poly(A) tail deadenylation (PubMed:23843623).</text>
</comment>
<comment type="similarity">
    <text evidence="4">Belongs to the CAF1 family.</text>
</comment>